<proteinExistence type="evidence at protein level"/>
<organism>
    <name type="scientific">Saccharolobus solfataricus (strain ATCC 35092 / DSM 1617 / JCM 11322 / P2)</name>
    <name type="common">Sulfolobus solfataricus</name>
    <dbReference type="NCBI Taxonomy" id="273057"/>
    <lineage>
        <taxon>Archaea</taxon>
        <taxon>Thermoproteota</taxon>
        <taxon>Thermoprotei</taxon>
        <taxon>Sulfolobales</taxon>
        <taxon>Sulfolobaceae</taxon>
        <taxon>Saccharolobus</taxon>
    </lineage>
</organism>
<comment type="function">
    <text evidence="1">Involved in targeting and insertion of nascent membrane proteins into the cytoplasmic membrane. Binds directly to 7S RNA and mediates binding of the 54 kDa subunit of the SRP.</text>
</comment>
<comment type="subunit">
    <text evidence="1">Part of the signal recognition particle protein translocation system, which is composed of SRP and FtsY. Archaeal SRP consists of a 7S RNA molecule of 300 nucleotides and two protein subunits: SRP54 and SRP19.</text>
</comment>
<comment type="subcellular location">
    <subcellularLocation>
        <location evidence="1">Cytoplasm</location>
    </subcellularLocation>
</comment>
<comment type="similarity">
    <text evidence="1">Belongs to the SRP19 family.</text>
</comment>
<reference key="1">
    <citation type="journal article" date="2001" name="Proc. Natl. Acad. Sci. U.S.A.">
        <title>The complete genome of the crenarchaeon Sulfolobus solfataricus P2.</title>
        <authorList>
            <person name="She Q."/>
            <person name="Singh R.K."/>
            <person name="Confalonieri F."/>
            <person name="Zivanovic Y."/>
            <person name="Allard G."/>
            <person name="Awayez M.J."/>
            <person name="Chan-Weiher C.C.-Y."/>
            <person name="Clausen I.G."/>
            <person name="Curtis B.A."/>
            <person name="De Moors A."/>
            <person name="Erauso G."/>
            <person name="Fletcher C."/>
            <person name="Gordon P.M.K."/>
            <person name="Heikamp-de Jong I."/>
            <person name="Jeffries A.C."/>
            <person name="Kozera C.J."/>
            <person name="Medina N."/>
            <person name="Peng X."/>
            <person name="Thi-Ngoc H.P."/>
            <person name="Redder P."/>
            <person name="Schenk M.E."/>
            <person name="Theriault C."/>
            <person name="Tolstrup N."/>
            <person name="Charlebois R.L."/>
            <person name="Doolittle W.F."/>
            <person name="Duguet M."/>
            <person name="Gaasterland T."/>
            <person name="Garrett R.A."/>
            <person name="Ragan M.A."/>
            <person name="Sensen C.W."/>
            <person name="Van der Oost J."/>
        </authorList>
    </citation>
    <scope>NUCLEOTIDE SEQUENCE [LARGE SCALE GENOMIC DNA]</scope>
    <source>
        <strain>ATCC 35092 / DSM 1617 / JCM 11322 / P2</strain>
    </source>
</reference>
<protein>
    <recommendedName>
        <fullName evidence="1">Signal recognition particle 19 kDa protein</fullName>
        <shortName evidence="1">SRP19</shortName>
    </recommendedName>
</protein>
<gene>
    <name evidence="1" type="primary">srp19</name>
    <name type="ordered locus">SSO0165</name>
</gene>
<name>SRP19_SACS2</name>
<accession>Q980W2</accession>
<feature type="chain" id="PRO_0000135225" description="Signal recognition particle 19 kDa protein">
    <location>
        <begin position="1"/>
        <end position="102"/>
    </location>
</feature>
<feature type="helix" evidence="2">
    <location>
        <begin position="5"/>
        <end position="9"/>
    </location>
</feature>
<feature type="strand" evidence="2">
    <location>
        <begin position="11"/>
        <end position="14"/>
    </location>
</feature>
<feature type="helix" evidence="2">
    <location>
        <begin position="17"/>
        <end position="20"/>
    </location>
</feature>
<feature type="turn" evidence="2">
    <location>
        <begin position="24"/>
        <end position="27"/>
    </location>
</feature>
<feature type="helix" evidence="2">
    <location>
        <begin position="39"/>
        <end position="48"/>
    </location>
</feature>
<feature type="strand" evidence="2">
    <location>
        <begin position="54"/>
        <end position="56"/>
    </location>
</feature>
<feature type="strand" evidence="2">
    <location>
        <begin position="70"/>
        <end position="74"/>
    </location>
</feature>
<feature type="strand" evidence="2">
    <location>
        <begin position="76"/>
        <end position="78"/>
    </location>
</feature>
<feature type="helix" evidence="2">
    <location>
        <begin position="79"/>
        <end position="90"/>
    </location>
</feature>
<keyword id="KW-0002">3D-structure</keyword>
<keyword id="KW-0963">Cytoplasm</keyword>
<keyword id="KW-1185">Reference proteome</keyword>
<keyword id="KW-0687">Ribonucleoprotein</keyword>
<keyword id="KW-0694">RNA-binding</keyword>
<keyword id="KW-0733">Signal recognition particle</keyword>
<sequence>MSLRDLKEENRIVIWPSYFFSPTRSKGRRLARIPYKIKTEELVSTLRELGLDPIVIENKKYPRDRKINFLIAVKKVKSKNYTLKIIHNALMGTRQTNPNKSN</sequence>
<dbReference type="EMBL" id="AE006641">
    <property type="protein sequence ID" value="AAK40510.1"/>
    <property type="molecule type" value="Genomic_DNA"/>
</dbReference>
<dbReference type="PIR" id="G90156">
    <property type="entry name" value="G90156"/>
</dbReference>
<dbReference type="RefSeq" id="WP_009990389.1">
    <property type="nucleotide sequence ID" value="NC_002754.1"/>
</dbReference>
<dbReference type="PDB" id="3KTW">
    <property type="method" value="X-ray"/>
    <property type="resolution" value="3.20 A"/>
    <property type="chains" value="A/B=2-102"/>
</dbReference>
<dbReference type="PDBsum" id="3KTW"/>
<dbReference type="SMR" id="Q980W2"/>
<dbReference type="STRING" id="273057.SSO0165"/>
<dbReference type="PaxDb" id="273057-SSO0165"/>
<dbReference type="EnsemblBacteria" id="AAK40510">
    <property type="protein sequence ID" value="AAK40510"/>
    <property type="gene ID" value="SSO0165"/>
</dbReference>
<dbReference type="KEGG" id="sso:SSO0165"/>
<dbReference type="PATRIC" id="fig|273057.12.peg.161"/>
<dbReference type="eggNOG" id="arCOG01217">
    <property type="taxonomic scope" value="Archaea"/>
</dbReference>
<dbReference type="HOGENOM" id="CLU_169299_1_0_2"/>
<dbReference type="InParanoid" id="Q980W2"/>
<dbReference type="EvolutionaryTrace" id="Q980W2"/>
<dbReference type="Proteomes" id="UP000001974">
    <property type="component" value="Chromosome"/>
</dbReference>
<dbReference type="GO" id="GO:0048500">
    <property type="term" value="C:signal recognition particle"/>
    <property type="evidence" value="ECO:0007669"/>
    <property type="project" value="UniProtKB-UniRule"/>
</dbReference>
<dbReference type="GO" id="GO:0008312">
    <property type="term" value="F:7S RNA binding"/>
    <property type="evidence" value="ECO:0007669"/>
    <property type="project" value="UniProtKB-UniRule"/>
</dbReference>
<dbReference type="GO" id="GO:0006614">
    <property type="term" value="P:SRP-dependent cotranslational protein targeting to membrane"/>
    <property type="evidence" value="ECO:0007669"/>
    <property type="project" value="InterPro"/>
</dbReference>
<dbReference type="Gene3D" id="3.30.56.30">
    <property type="entry name" value="Signal recognition particle, SRP19-like subunit"/>
    <property type="match status" value="1"/>
</dbReference>
<dbReference type="HAMAP" id="MF_00305">
    <property type="entry name" value="SRP19"/>
    <property type="match status" value="1"/>
</dbReference>
<dbReference type="InterPro" id="IPR002778">
    <property type="entry name" value="Signal_recog_particle_SRP19"/>
</dbReference>
<dbReference type="InterPro" id="IPR036521">
    <property type="entry name" value="SRP19-like_sf"/>
</dbReference>
<dbReference type="InterPro" id="IPR022938">
    <property type="entry name" value="SRP19_arc-type"/>
</dbReference>
<dbReference type="Pfam" id="PF01922">
    <property type="entry name" value="SRP19"/>
    <property type="match status" value="1"/>
</dbReference>
<dbReference type="SUPFAM" id="SSF69695">
    <property type="entry name" value="SRP19"/>
    <property type="match status" value="1"/>
</dbReference>
<evidence type="ECO:0000255" key="1">
    <source>
        <dbReference type="HAMAP-Rule" id="MF_00305"/>
    </source>
</evidence>
<evidence type="ECO:0007829" key="2">
    <source>
        <dbReference type="PDB" id="3KTW"/>
    </source>
</evidence>